<sequence>MSVAPVVDVLQGRVAVDSEVTVRGWIRTRRDSKAGISFLAVYDGSCFNPLQAVVNNNLPNYQDEVLHLTTGCSVEVTGTVVASLGQGQNFELQATKIVVIGLVEDPDTYPMAAKRHSIEYLREVAHLRPRTNLIGAVARMRHTLAQALHRFFHENGYFWVSTPLITAADTEGAGEMFRVSTLDLQNLPLTDKGEVDFNQDFFGREAFLTVSGQLNGEAYACALSKVYTFGPTFRAENSNTSRHLAEFWMLEPEIAFANLNDAATLAENMLKYVFKAALAERADDLQFFAERVDKDVITRLEKFINSDFAQIDYTSAIEILQNCGQKFENPVFWGVDLSSEHERYLAEKHFQAPVVVKNYPKDIKAFYMRMNDDGKTVAALDVLAPGIGEIIGGSQREERLDMLDKRLEEMGLNKEDYWWYRDLRRYGTVPHSGFGLGFERLVAYVTGVPNVRDVIPFPRTPRSANF</sequence>
<name>SYN_PHOLL</name>
<dbReference type="EC" id="6.1.1.22" evidence="1"/>
<dbReference type="EMBL" id="BX571865">
    <property type="protein sequence ID" value="CAE14046.1"/>
    <property type="molecule type" value="Genomic_DNA"/>
</dbReference>
<dbReference type="RefSeq" id="WP_011146032.1">
    <property type="nucleotide sequence ID" value="NC_005126.1"/>
</dbReference>
<dbReference type="SMR" id="Q7N622"/>
<dbReference type="STRING" id="243265.plu1753"/>
<dbReference type="GeneID" id="48848036"/>
<dbReference type="KEGG" id="plu:plu1753"/>
<dbReference type="eggNOG" id="COG0017">
    <property type="taxonomic scope" value="Bacteria"/>
</dbReference>
<dbReference type="HOGENOM" id="CLU_004553_2_0_6"/>
<dbReference type="OrthoDB" id="9762036at2"/>
<dbReference type="Proteomes" id="UP000002514">
    <property type="component" value="Chromosome"/>
</dbReference>
<dbReference type="GO" id="GO:0005737">
    <property type="term" value="C:cytoplasm"/>
    <property type="evidence" value="ECO:0007669"/>
    <property type="project" value="UniProtKB-SubCell"/>
</dbReference>
<dbReference type="GO" id="GO:0004816">
    <property type="term" value="F:asparagine-tRNA ligase activity"/>
    <property type="evidence" value="ECO:0007669"/>
    <property type="project" value="UniProtKB-UniRule"/>
</dbReference>
<dbReference type="GO" id="GO:0005524">
    <property type="term" value="F:ATP binding"/>
    <property type="evidence" value="ECO:0007669"/>
    <property type="project" value="UniProtKB-UniRule"/>
</dbReference>
<dbReference type="GO" id="GO:0003676">
    <property type="term" value="F:nucleic acid binding"/>
    <property type="evidence" value="ECO:0007669"/>
    <property type="project" value="InterPro"/>
</dbReference>
<dbReference type="GO" id="GO:0006421">
    <property type="term" value="P:asparaginyl-tRNA aminoacylation"/>
    <property type="evidence" value="ECO:0007669"/>
    <property type="project" value="UniProtKB-UniRule"/>
</dbReference>
<dbReference type="CDD" id="cd00776">
    <property type="entry name" value="AsxRS_core"/>
    <property type="match status" value="1"/>
</dbReference>
<dbReference type="CDD" id="cd04318">
    <property type="entry name" value="EcAsnRS_like_N"/>
    <property type="match status" value="1"/>
</dbReference>
<dbReference type="FunFam" id="3.30.930.10:FF:000016">
    <property type="entry name" value="Asparagine--tRNA ligase"/>
    <property type="match status" value="1"/>
</dbReference>
<dbReference type="Gene3D" id="3.30.930.10">
    <property type="entry name" value="Bira Bifunctional Protein, Domain 2"/>
    <property type="match status" value="1"/>
</dbReference>
<dbReference type="Gene3D" id="2.40.50.140">
    <property type="entry name" value="Nucleic acid-binding proteins"/>
    <property type="match status" value="1"/>
</dbReference>
<dbReference type="HAMAP" id="MF_00534">
    <property type="entry name" value="Asn_tRNA_synth"/>
    <property type="match status" value="1"/>
</dbReference>
<dbReference type="InterPro" id="IPR004364">
    <property type="entry name" value="Aa-tRNA-synt_II"/>
</dbReference>
<dbReference type="InterPro" id="IPR006195">
    <property type="entry name" value="aa-tRNA-synth_II"/>
</dbReference>
<dbReference type="InterPro" id="IPR045864">
    <property type="entry name" value="aa-tRNA-synth_II/BPL/LPL"/>
</dbReference>
<dbReference type="InterPro" id="IPR004522">
    <property type="entry name" value="Asn-tRNA-ligase"/>
</dbReference>
<dbReference type="InterPro" id="IPR002312">
    <property type="entry name" value="Asp/Asn-tRNA-synth_IIb"/>
</dbReference>
<dbReference type="InterPro" id="IPR012340">
    <property type="entry name" value="NA-bd_OB-fold"/>
</dbReference>
<dbReference type="InterPro" id="IPR004365">
    <property type="entry name" value="NA-bd_OB_tRNA"/>
</dbReference>
<dbReference type="NCBIfam" id="TIGR00457">
    <property type="entry name" value="asnS"/>
    <property type="match status" value="1"/>
</dbReference>
<dbReference type="NCBIfam" id="NF003037">
    <property type="entry name" value="PRK03932.1"/>
    <property type="match status" value="1"/>
</dbReference>
<dbReference type="PANTHER" id="PTHR22594:SF34">
    <property type="entry name" value="ASPARAGINE--TRNA LIGASE, MITOCHONDRIAL-RELATED"/>
    <property type="match status" value="1"/>
</dbReference>
<dbReference type="PANTHER" id="PTHR22594">
    <property type="entry name" value="ASPARTYL/LYSYL-TRNA SYNTHETASE"/>
    <property type="match status" value="1"/>
</dbReference>
<dbReference type="Pfam" id="PF00152">
    <property type="entry name" value="tRNA-synt_2"/>
    <property type="match status" value="1"/>
</dbReference>
<dbReference type="Pfam" id="PF01336">
    <property type="entry name" value="tRNA_anti-codon"/>
    <property type="match status" value="1"/>
</dbReference>
<dbReference type="PRINTS" id="PR01042">
    <property type="entry name" value="TRNASYNTHASP"/>
</dbReference>
<dbReference type="SUPFAM" id="SSF55681">
    <property type="entry name" value="Class II aaRS and biotin synthetases"/>
    <property type="match status" value="1"/>
</dbReference>
<dbReference type="SUPFAM" id="SSF50249">
    <property type="entry name" value="Nucleic acid-binding proteins"/>
    <property type="match status" value="1"/>
</dbReference>
<dbReference type="PROSITE" id="PS50862">
    <property type="entry name" value="AA_TRNA_LIGASE_II"/>
    <property type="match status" value="1"/>
</dbReference>
<proteinExistence type="inferred from homology"/>
<organism>
    <name type="scientific">Photorhabdus laumondii subsp. laumondii (strain DSM 15139 / CIP 105565 / TT01)</name>
    <name type="common">Photorhabdus luminescens subsp. laumondii</name>
    <dbReference type="NCBI Taxonomy" id="243265"/>
    <lineage>
        <taxon>Bacteria</taxon>
        <taxon>Pseudomonadati</taxon>
        <taxon>Pseudomonadota</taxon>
        <taxon>Gammaproteobacteria</taxon>
        <taxon>Enterobacterales</taxon>
        <taxon>Morganellaceae</taxon>
        <taxon>Photorhabdus</taxon>
    </lineage>
</organism>
<protein>
    <recommendedName>
        <fullName evidence="1">Asparagine--tRNA ligase</fullName>
        <ecNumber evidence="1">6.1.1.22</ecNumber>
    </recommendedName>
    <alternativeName>
        <fullName evidence="1">Asparaginyl-tRNA synthetase</fullName>
        <shortName evidence="1">AsnRS</shortName>
    </alternativeName>
</protein>
<accession>Q7N622</accession>
<reference key="1">
    <citation type="journal article" date="2003" name="Nat. Biotechnol.">
        <title>The genome sequence of the entomopathogenic bacterium Photorhabdus luminescens.</title>
        <authorList>
            <person name="Duchaud E."/>
            <person name="Rusniok C."/>
            <person name="Frangeul L."/>
            <person name="Buchrieser C."/>
            <person name="Givaudan A."/>
            <person name="Taourit S."/>
            <person name="Bocs S."/>
            <person name="Boursaux-Eude C."/>
            <person name="Chandler M."/>
            <person name="Charles J.-F."/>
            <person name="Dassa E."/>
            <person name="Derose R."/>
            <person name="Derzelle S."/>
            <person name="Freyssinet G."/>
            <person name="Gaudriault S."/>
            <person name="Medigue C."/>
            <person name="Lanois A."/>
            <person name="Powell K."/>
            <person name="Siguier P."/>
            <person name="Vincent R."/>
            <person name="Wingate V."/>
            <person name="Zouine M."/>
            <person name="Glaser P."/>
            <person name="Boemare N."/>
            <person name="Danchin A."/>
            <person name="Kunst F."/>
        </authorList>
    </citation>
    <scope>NUCLEOTIDE SEQUENCE [LARGE SCALE GENOMIC DNA]</scope>
    <source>
        <strain>DSM 15139 / CIP 105565 / TT01</strain>
    </source>
</reference>
<feature type="chain" id="PRO_0000176439" description="Asparagine--tRNA ligase">
    <location>
        <begin position="1"/>
        <end position="466"/>
    </location>
</feature>
<evidence type="ECO:0000255" key="1">
    <source>
        <dbReference type="HAMAP-Rule" id="MF_00534"/>
    </source>
</evidence>
<comment type="catalytic activity">
    <reaction evidence="1">
        <text>tRNA(Asn) + L-asparagine + ATP = L-asparaginyl-tRNA(Asn) + AMP + diphosphate + H(+)</text>
        <dbReference type="Rhea" id="RHEA:11180"/>
        <dbReference type="Rhea" id="RHEA-COMP:9659"/>
        <dbReference type="Rhea" id="RHEA-COMP:9674"/>
        <dbReference type="ChEBI" id="CHEBI:15378"/>
        <dbReference type="ChEBI" id="CHEBI:30616"/>
        <dbReference type="ChEBI" id="CHEBI:33019"/>
        <dbReference type="ChEBI" id="CHEBI:58048"/>
        <dbReference type="ChEBI" id="CHEBI:78442"/>
        <dbReference type="ChEBI" id="CHEBI:78515"/>
        <dbReference type="ChEBI" id="CHEBI:456215"/>
        <dbReference type="EC" id="6.1.1.22"/>
    </reaction>
</comment>
<comment type="subunit">
    <text evidence="1">Homodimer.</text>
</comment>
<comment type="subcellular location">
    <subcellularLocation>
        <location evidence="1">Cytoplasm</location>
    </subcellularLocation>
</comment>
<comment type="similarity">
    <text evidence="1">Belongs to the class-II aminoacyl-tRNA synthetase family.</text>
</comment>
<keyword id="KW-0030">Aminoacyl-tRNA synthetase</keyword>
<keyword id="KW-0067">ATP-binding</keyword>
<keyword id="KW-0963">Cytoplasm</keyword>
<keyword id="KW-0436">Ligase</keyword>
<keyword id="KW-0547">Nucleotide-binding</keyword>
<keyword id="KW-0648">Protein biosynthesis</keyword>
<keyword id="KW-1185">Reference proteome</keyword>
<gene>
    <name evidence="1" type="primary">asnS</name>
    <name type="ordered locus">plu1753</name>
</gene>